<comment type="function">
    <text evidence="1">Catalyzes the dephosphorylation of the nucleoside 5'-monophosphates deoxyadenosine monophosphate (dAMP), deoxycytidine monophosphate (dCMP), deoxyguanosine monophosphate (dGMP) and deoxythymidine monophosphate (dTMP).</text>
</comment>
<comment type="catalytic activity">
    <reaction evidence="1">
        <text>a 2'-deoxyribonucleoside 5'-phosphate + H2O = a 2'-deoxyribonucleoside + phosphate</text>
        <dbReference type="Rhea" id="RHEA:36167"/>
        <dbReference type="ChEBI" id="CHEBI:15377"/>
        <dbReference type="ChEBI" id="CHEBI:18274"/>
        <dbReference type="ChEBI" id="CHEBI:43474"/>
        <dbReference type="ChEBI" id="CHEBI:65317"/>
        <dbReference type="EC" id="3.1.3.89"/>
    </reaction>
</comment>
<comment type="cofactor">
    <cofactor evidence="1">
        <name>Mn(2+)</name>
        <dbReference type="ChEBI" id="CHEBI:29035"/>
    </cofactor>
    <cofactor evidence="1">
        <name>Co(2+)</name>
        <dbReference type="ChEBI" id="CHEBI:48828"/>
    </cofactor>
    <cofactor evidence="1">
        <name>Mg(2+)</name>
        <dbReference type="ChEBI" id="CHEBI:18420"/>
    </cofactor>
    <text evidence="1 2">Binds 2 divalent metal cations (By similarity). Shows activity with Mn(2+), Co(2+) and Mg(2+) but shows no activity with Zn(2+) (By similarity).</text>
</comment>
<comment type="subunit">
    <text evidence="1">Homodimer.</text>
</comment>
<comment type="subcellular location">
    <subcellularLocation>
        <location evidence="4">Cytoplasm</location>
    </subcellularLocation>
    <subcellularLocation>
        <location evidence="4">Nucleus</location>
    </subcellularLocation>
</comment>
<comment type="similarity">
    <text evidence="5">Belongs to the HDDC2 family.</text>
</comment>
<feature type="chain" id="PRO_0000311393" description="5'-deoxynucleotidase hdd1">
    <location>
        <begin position="1"/>
        <end position="198"/>
    </location>
</feature>
<feature type="domain" description="HD" evidence="3">
    <location>
        <begin position="38"/>
        <end position="144"/>
    </location>
</feature>
<feature type="binding site" evidence="1">
    <location>
        <position position="41"/>
    </location>
    <ligand>
        <name>a divalent metal cation</name>
        <dbReference type="ChEBI" id="CHEBI:60240"/>
        <label>1</label>
    </ligand>
</feature>
<feature type="binding site" evidence="1">
    <location>
        <position position="69"/>
    </location>
    <ligand>
        <name>a divalent metal cation</name>
        <dbReference type="ChEBI" id="CHEBI:60240"/>
        <label>1</label>
    </ligand>
</feature>
<feature type="binding site" evidence="1">
    <location>
        <position position="70"/>
    </location>
    <ligand>
        <name>a divalent metal cation</name>
        <dbReference type="ChEBI" id="CHEBI:60240"/>
        <label>1</label>
    </ligand>
</feature>
<feature type="binding site" evidence="2">
    <location>
        <position position="73"/>
    </location>
    <ligand>
        <name>a divalent metal cation</name>
        <dbReference type="ChEBI" id="CHEBI:60240"/>
        <label>2</label>
    </ligand>
</feature>
<feature type="binding site" evidence="2">
    <location>
        <position position="78"/>
    </location>
    <ligand>
        <name>a divalent metal cation</name>
        <dbReference type="ChEBI" id="CHEBI:60240"/>
        <label>2</label>
    </ligand>
</feature>
<feature type="binding site" evidence="2">
    <location>
        <position position="79"/>
    </location>
    <ligand>
        <name>a divalent metal cation</name>
        <dbReference type="ChEBI" id="CHEBI:60240"/>
        <label>2</label>
    </ligand>
</feature>
<feature type="binding site" evidence="1">
    <location>
        <position position="139"/>
    </location>
    <ligand>
        <name>a divalent metal cation</name>
        <dbReference type="ChEBI" id="CHEBI:60240"/>
        <label>1</label>
    </ligand>
</feature>
<name>HDD1_SCHPO</name>
<sequence length="198" mass="22929">MNAAKSLSIVPFLDCLSRLKTTPRTGWLYHGIEKPESIADHMYRMGILTMLCNDPSINKERCLKIAVVHDMAESIVGDITPHENVSKEEKHRMESEAMVSITQQLIPLNLSLQAEEIKELFLEYESASTPEAKFVKDIDKFEMIAQMFEYERKFNGEKDLSQFTWAGKLIQHPLVKGWLNDVLQEREQFWASVRQKKL</sequence>
<accession>P87242</accession>
<evidence type="ECO:0000250" key="1">
    <source>
        <dbReference type="UniProtKB" id="P53144"/>
    </source>
</evidence>
<evidence type="ECO:0000250" key="2">
    <source>
        <dbReference type="UniProtKB" id="Q7Z4H3"/>
    </source>
</evidence>
<evidence type="ECO:0000255" key="3">
    <source>
        <dbReference type="PROSITE-ProRule" id="PRU01175"/>
    </source>
</evidence>
<evidence type="ECO:0000269" key="4">
    <source>
    </source>
</evidence>
<evidence type="ECO:0000305" key="5"/>
<evidence type="ECO:0000312" key="6">
    <source>
        <dbReference type="PomBase" id="SPCC4G3.17"/>
    </source>
</evidence>
<protein>
    <recommendedName>
        <fullName evidence="5">5'-deoxynucleotidase hdd1</fullName>
        <ecNumber evidence="1">3.1.3.89</ecNumber>
    </recommendedName>
</protein>
<gene>
    <name evidence="6" type="primary">hdd1</name>
    <name type="ORF">SPCC4G3.17</name>
</gene>
<dbReference type="EC" id="3.1.3.89" evidence="1"/>
<dbReference type="EMBL" id="CU329672">
    <property type="protein sequence ID" value="CAB09764.1"/>
    <property type="molecule type" value="Genomic_DNA"/>
</dbReference>
<dbReference type="PIR" id="T41359">
    <property type="entry name" value="T41359"/>
</dbReference>
<dbReference type="RefSeq" id="NP_587821.1">
    <property type="nucleotide sequence ID" value="NM_001022814.2"/>
</dbReference>
<dbReference type="SMR" id="P87242"/>
<dbReference type="BioGRID" id="275975">
    <property type="interactions" value="8"/>
</dbReference>
<dbReference type="FunCoup" id="P87242">
    <property type="interactions" value="163"/>
</dbReference>
<dbReference type="STRING" id="284812.P87242"/>
<dbReference type="SwissPalm" id="P87242"/>
<dbReference type="PaxDb" id="4896-SPCC4G3.17.1"/>
<dbReference type="EnsemblFungi" id="SPCC4G3.17.1">
    <property type="protein sequence ID" value="SPCC4G3.17.1:pep"/>
    <property type="gene ID" value="SPCC4G3.17"/>
</dbReference>
<dbReference type="GeneID" id="2539410"/>
<dbReference type="KEGG" id="spo:2539410"/>
<dbReference type="PomBase" id="SPCC4G3.17">
    <property type="gene designation" value="hdd1"/>
</dbReference>
<dbReference type="VEuPathDB" id="FungiDB:SPCC4G3.17"/>
<dbReference type="eggNOG" id="KOG3197">
    <property type="taxonomic scope" value="Eukaryota"/>
</dbReference>
<dbReference type="HOGENOM" id="CLU_039453_2_1_1"/>
<dbReference type="InParanoid" id="P87242"/>
<dbReference type="OMA" id="TWRLCLM"/>
<dbReference type="PhylomeDB" id="P87242"/>
<dbReference type="PRO" id="PR:P87242"/>
<dbReference type="Proteomes" id="UP000002485">
    <property type="component" value="Chromosome III"/>
</dbReference>
<dbReference type="GO" id="GO:0005829">
    <property type="term" value="C:cytosol"/>
    <property type="evidence" value="ECO:0007005"/>
    <property type="project" value="PomBase"/>
</dbReference>
<dbReference type="GO" id="GO:0005634">
    <property type="term" value="C:nucleus"/>
    <property type="evidence" value="ECO:0007005"/>
    <property type="project" value="PomBase"/>
</dbReference>
<dbReference type="GO" id="GO:0002953">
    <property type="term" value="F:5'-deoxynucleotidase activity"/>
    <property type="evidence" value="ECO:0000318"/>
    <property type="project" value="GO_Central"/>
</dbReference>
<dbReference type="GO" id="GO:0050484">
    <property type="term" value="F:GMP 5'-nucleotidase activity"/>
    <property type="evidence" value="ECO:0000266"/>
    <property type="project" value="PomBase"/>
</dbReference>
<dbReference type="GO" id="GO:0046872">
    <property type="term" value="F:metal ion binding"/>
    <property type="evidence" value="ECO:0007669"/>
    <property type="project" value="UniProtKB-KW"/>
</dbReference>
<dbReference type="GO" id="GO:0009159">
    <property type="term" value="P:deoxyribonucleoside monophosphate catabolic process"/>
    <property type="evidence" value="ECO:0000266"/>
    <property type="project" value="PomBase"/>
</dbReference>
<dbReference type="FunFam" id="1.10.3210.10:FF:000011">
    <property type="entry name" value="HD domain-containing protein 2"/>
    <property type="match status" value="1"/>
</dbReference>
<dbReference type="Gene3D" id="1.10.3210.10">
    <property type="entry name" value="Hypothetical protein af1432"/>
    <property type="match status" value="1"/>
</dbReference>
<dbReference type="InterPro" id="IPR003607">
    <property type="entry name" value="HD/PDEase_dom"/>
</dbReference>
<dbReference type="InterPro" id="IPR006674">
    <property type="entry name" value="HD_domain"/>
</dbReference>
<dbReference type="InterPro" id="IPR039356">
    <property type="entry name" value="YfbR/HDDC2"/>
</dbReference>
<dbReference type="PANTHER" id="PTHR11845">
    <property type="entry name" value="5'-DEOXYNUCLEOTIDASE HDDC2"/>
    <property type="match status" value="1"/>
</dbReference>
<dbReference type="PANTHER" id="PTHR11845:SF13">
    <property type="entry name" value="5'-DEOXYNUCLEOTIDASE HDDC2"/>
    <property type="match status" value="1"/>
</dbReference>
<dbReference type="Pfam" id="PF13023">
    <property type="entry name" value="HD_3"/>
    <property type="match status" value="1"/>
</dbReference>
<dbReference type="SMART" id="SM00471">
    <property type="entry name" value="HDc"/>
    <property type="match status" value="1"/>
</dbReference>
<dbReference type="SUPFAM" id="SSF109604">
    <property type="entry name" value="HD-domain/PDEase-like"/>
    <property type="match status" value="1"/>
</dbReference>
<dbReference type="PROSITE" id="PS51831">
    <property type="entry name" value="HD"/>
    <property type="match status" value="1"/>
</dbReference>
<keyword id="KW-0170">Cobalt</keyword>
<keyword id="KW-0963">Cytoplasm</keyword>
<keyword id="KW-0378">Hydrolase</keyword>
<keyword id="KW-0460">Magnesium</keyword>
<keyword id="KW-0464">Manganese</keyword>
<keyword id="KW-0479">Metal-binding</keyword>
<keyword id="KW-0539">Nucleus</keyword>
<keyword id="KW-1185">Reference proteome</keyword>
<organism>
    <name type="scientific">Schizosaccharomyces pombe (strain 972 / ATCC 24843)</name>
    <name type="common">Fission yeast</name>
    <dbReference type="NCBI Taxonomy" id="284812"/>
    <lineage>
        <taxon>Eukaryota</taxon>
        <taxon>Fungi</taxon>
        <taxon>Dikarya</taxon>
        <taxon>Ascomycota</taxon>
        <taxon>Taphrinomycotina</taxon>
        <taxon>Schizosaccharomycetes</taxon>
        <taxon>Schizosaccharomycetales</taxon>
        <taxon>Schizosaccharomycetaceae</taxon>
        <taxon>Schizosaccharomyces</taxon>
    </lineage>
</organism>
<reference key="1">
    <citation type="journal article" date="2002" name="Nature">
        <title>The genome sequence of Schizosaccharomyces pombe.</title>
        <authorList>
            <person name="Wood V."/>
            <person name="Gwilliam R."/>
            <person name="Rajandream M.A."/>
            <person name="Lyne M.H."/>
            <person name="Lyne R."/>
            <person name="Stewart A."/>
            <person name="Sgouros J.G."/>
            <person name="Peat N."/>
            <person name="Hayles J."/>
            <person name="Baker S.G."/>
            <person name="Basham D."/>
            <person name="Bowman S."/>
            <person name="Brooks K."/>
            <person name="Brown D."/>
            <person name="Brown S."/>
            <person name="Chillingworth T."/>
            <person name="Churcher C.M."/>
            <person name="Collins M."/>
            <person name="Connor R."/>
            <person name="Cronin A."/>
            <person name="Davis P."/>
            <person name="Feltwell T."/>
            <person name="Fraser A."/>
            <person name="Gentles S."/>
            <person name="Goble A."/>
            <person name="Hamlin N."/>
            <person name="Harris D.E."/>
            <person name="Hidalgo J."/>
            <person name="Hodgson G."/>
            <person name="Holroyd S."/>
            <person name="Hornsby T."/>
            <person name="Howarth S."/>
            <person name="Huckle E.J."/>
            <person name="Hunt S."/>
            <person name="Jagels K."/>
            <person name="James K.D."/>
            <person name="Jones L."/>
            <person name="Jones M."/>
            <person name="Leather S."/>
            <person name="McDonald S."/>
            <person name="McLean J."/>
            <person name="Mooney P."/>
            <person name="Moule S."/>
            <person name="Mungall K.L."/>
            <person name="Murphy L.D."/>
            <person name="Niblett D."/>
            <person name="Odell C."/>
            <person name="Oliver K."/>
            <person name="O'Neil S."/>
            <person name="Pearson D."/>
            <person name="Quail M.A."/>
            <person name="Rabbinowitsch E."/>
            <person name="Rutherford K.M."/>
            <person name="Rutter S."/>
            <person name="Saunders D."/>
            <person name="Seeger K."/>
            <person name="Sharp S."/>
            <person name="Skelton J."/>
            <person name="Simmonds M.N."/>
            <person name="Squares R."/>
            <person name="Squares S."/>
            <person name="Stevens K."/>
            <person name="Taylor K."/>
            <person name="Taylor R.G."/>
            <person name="Tivey A."/>
            <person name="Walsh S.V."/>
            <person name="Warren T."/>
            <person name="Whitehead S."/>
            <person name="Woodward J.R."/>
            <person name="Volckaert G."/>
            <person name="Aert R."/>
            <person name="Robben J."/>
            <person name="Grymonprez B."/>
            <person name="Weltjens I."/>
            <person name="Vanstreels E."/>
            <person name="Rieger M."/>
            <person name="Schaefer M."/>
            <person name="Mueller-Auer S."/>
            <person name="Gabel C."/>
            <person name="Fuchs M."/>
            <person name="Duesterhoeft A."/>
            <person name="Fritzc C."/>
            <person name="Holzer E."/>
            <person name="Moestl D."/>
            <person name="Hilbert H."/>
            <person name="Borzym K."/>
            <person name="Langer I."/>
            <person name="Beck A."/>
            <person name="Lehrach H."/>
            <person name="Reinhardt R."/>
            <person name="Pohl T.M."/>
            <person name="Eger P."/>
            <person name="Zimmermann W."/>
            <person name="Wedler H."/>
            <person name="Wambutt R."/>
            <person name="Purnelle B."/>
            <person name="Goffeau A."/>
            <person name="Cadieu E."/>
            <person name="Dreano S."/>
            <person name="Gloux S."/>
            <person name="Lelaure V."/>
            <person name="Mottier S."/>
            <person name="Galibert F."/>
            <person name="Aves S.J."/>
            <person name="Xiang Z."/>
            <person name="Hunt C."/>
            <person name="Moore K."/>
            <person name="Hurst S.M."/>
            <person name="Lucas M."/>
            <person name="Rochet M."/>
            <person name="Gaillardin C."/>
            <person name="Tallada V.A."/>
            <person name="Garzon A."/>
            <person name="Thode G."/>
            <person name="Daga R.R."/>
            <person name="Cruzado L."/>
            <person name="Jimenez J."/>
            <person name="Sanchez M."/>
            <person name="del Rey F."/>
            <person name="Benito J."/>
            <person name="Dominguez A."/>
            <person name="Revuelta J.L."/>
            <person name="Moreno S."/>
            <person name="Armstrong J."/>
            <person name="Forsburg S.L."/>
            <person name="Cerutti L."/>
            <person name="Lowe T."/>
            <person name="McCombie W.R."/>
            <person name="Paulsen I."/>
            <person name="Potashkin J."/>
            <person name="Shpakovski G.V."/>
            <person name="Ussery D."/>
            <person name="Barrell B.G."/>
            <person name="Nurse P."/>
        </authorList>
    </citation>
    <scope>NUCLEOTIDE SEQUENCE [LARGE SCALE GENOMIC DNA]</scope>
    <source>
        <strain>972 / ATCC 24843</strain>
    </source>
</reference>
<reference key="2">
    <citation type="journal article" date="2006" name="Nat. Biotechnol.">
        <title>ORFeome cloning and global analysis of protein localization in the fission yeast Schizosaccharomyces pombe.</title>
        <authorList>
            <person name="Matsuyama A."/>
            <person name="Arai R."/>
            <person name="Yashiroda Y."/>
            <person name="Shirai A."/>
            <person name="Kamata A."/>
            <person name="Sekido S."/>
            <person name="Kobayashi Y."/>
            <person name="Hashimoto A."/>
            <person name="Hamamoto M."/>
            <person name="Hiraoka Y."/>
            <person name="Horinouchi S."/>
            <person name="Yoshida M."/>
        </authorList>
    </citation>
    <scope>SUBCELLULAR LOCATION [LARGE SCALE ANALYSIS]</scope>
</reference>
<proteinExistence type="inferred from homology"/>